<evidence type="ECO:0000250" key="1">
    <source>
        <dbReference type="UniProtKB" id="B9TQX1"/>
    </source>
</evidence>
<evidence type="ECO:0000250" key="2">
    <source>
        <dbReference type="UniProtKB" id="Q14BU0"/>
    </source>
</evidence>
<evidence type="ECO:0000255" key="3"/>
<evidence type="ECO:0000256" key="4">
    <source>
        <dbReference type="SAM" id="MobiDB-lite"/>
    </source>
</evidence>
<evidence type="ECO:0000303" key="5">
    <source>
    </source>
</evidence>
<evidence type="ECO:0000305" key="6"/>
<evidence type="ECO:0000312" key="7">
    <source>
        <dbReference type="EMBL" id="ABX09788.1"/>
    </source>
</evidence>
<gene>
    <name type="primary">ucma</name>
    <name type="synonym">grp</name>
</gene>
<reference evidence="7" key="1">
    <citation type="journal article" date="2008" name="J. Biol. Chem.">
        <title>Gla-rich protein (GRP), a new vitamin K-dependent protein identified from sturgeon cartilage and highly conserved in vertebrates.</title>
        <authorList>
            <person name="Viegas C.S.B."/>
            <person name="Simes D.C."/>
            <person name="Laize V."/>
            <person name="Williamson M.K."/>
            <person name="Price P.A."/>
            <person name="Cancela M.L."/>
        </authorList>
    </citation>
    <scope>NUCLEOTIDE SEQUENCE [MRNA]</scope>
</reference>
<accession>B9TQX3</accession>
<proteinExistence type="evidence at transcript level"/>
<comment type="function">
    <text evidence="2">May be involved in the negative control of osteogenic differentiation of osteochondrogenic precursor cells in peripheral zones of fetal cartilage and at the cartilage-bone interface.</text>
</comment>
<comment type="subcellular location">
    <subcellularLocation>
        <location evidence="2">Secreted</location>
        <location evidence="2">Extracellular space</location>
        <location evidence="2">Extracellular matrix</location>
    </subcellularLocation>
</comment>
<comment type="PTM">
    <text evidence="2">Proteolytically cleaved by a furin-like convertase to generate a persistent C-terminal fragment found in almost the entire cartilage matrix, and affecting osteoblast differentiation.</text>
</comment>
<comment type="PTM">
    <text evidence="2">Sulfated on tyrosine residues.</text>
</comment>
<comment type="similarity">
    <text evidence="6">Belongs to the UCMA family.</text>
</comment>
<protein>
    <recommendedName>
        <fullName evidence="2">Unique cartilage matrix-associated protein</fullName>
    </recommendedName>
    <component>
        <recommendedName>
            <fullName evidence="2">Unique cartilage matrix-associated protein C-terminal fragment</fullName>
            <shortName evidence="2">Ucma-C</shortName>
        </recommendedName>
        <alternativeName>
            <fullName evidence="5 7">Gla-rich protein</fullName>
            <shortName evidence="5">GRP</shortName>
        </alternativeName>
    </component>
</protein>
<name>UCMA_DICLA</name>
<sequence length="133" mass="16109">MSWTRVVVLSSLTTLLILTFSSVVKSAAVRDDSKAGDPKGAARHVFMPESDASNFFKHRSRRSPRYYSERQAEQRVRLSANERRREYNEEQRNEFENYVEEERDEQNERSREKNEQVREYHYDGLYPRYHWFH</sequence>
<dbReference type="EMBL" id="EU022753">
    <property type="protein sequence ID" value="ABX09788.1"/>
    <property type="molecule type" value="mRNA"/>
</dbReference>
<dbReference type="Proteomes" id="UP000694389">
    <property type="component" value="Unplaced"/>
</dbReference>
<dbReference type="GO" id="GO:0031012">
    <property type="term" value="C:extracellular matrix"/>
    <property type="evidence" value="ECO:0007669"/>
    <property type="project" value="TreeGrafter"/>
</dbReference>
<dbReference type="GO" id="GO:0005576">
    <property type="term" value="C:extracellular region"/>
    <property type="evidence" value="ECO:0007669"/>
    <property type="project" value="UniProtKB-KW"/>
</dbReference>
<dbReference type="GO" id="GO:0048706">
    <property type="term" value="P:embryonic skeletal system development"/>
    <property type="evidence" value="ECO:0007669"/>
    <property type="project" value="TreeGrafter"/>
</dbReference>
<dbReference type="GO" id="GO:0045667">
    <property type="term" value="P:regulation of osteoblast differentiation"/>
    <property type="evidence" value="ECO:0007669"/>
    <property type="project" value="InterPro"/>
</dbReference>
<dbReference type="InterPro" id="IPR031386">
    <property type="entry name" value="UCMA"/>
</dbReference>
<dbReference type="PANTHER" id="PTHR28647">
    <property type="entry name" value="UNIQUE CARTILAGE MATRIX-ASSOCIATED PROTEIN"/>
    <property type="match status" value="1"/>
</dbReference>
<dbReference type="PANTHER" id="PTHR28647:SF2">
    <property type="entry name" value="UNIQUE CARTILAGE MATRIX-ASSOCIATED PROTEIN"/>
    <property type="match status" value="1"/>
</dbReference>
<dbReference type="Pfam" id="PF17085">
    <property type="entry name" value="UCMA"/>
    <property type="match status" value="1"/>
</dbReference>
<keyword id="KW-0175">Coiled coil</keyword>
<keyword id="KW-0272">Extracellular matrix</keyword>
<keyword id="KW-0301">Gamma-carboxyglutamic acid</keyword>
<keyword id="KW-1185">Reference proteome</keyword>
<keyword id="KW-0964">Secreted</keyword>
<keyword id="KW-0732">Signal</keyword>
<keyword id="KW-0765">Sulfation</keyword>
<feature type="signal peptide" evidence="3">
    <location>
        <begin position="1"/>
        <end position="26"/>
    </location>
</feature>
<feature type="chain" id="PRO_0000371237" description="Unique cartilage matrix-associated protein" evidence="3">
    <location>
        <begin position="27"/>
        <end position="133"/>
    </location>
</feature>
<feature type="propeptide" id="PRO_0000371238" description="Ucma-N" evidence="1">
    <location>
        <begin position="27"/>
        <end position="62"/>
    </location>
</feature>
<feature type="chain" id="PRO_0000371239" description="Unique cartilage matrix-associated protein C-terminal fragment" evidence="1">
    <location>
        <begin position="63"/>
        <end position="133"/>
    </location>
</feature>
<feature type="region of interest" description="Disordered" evidence="4">
    <location>
        <begin position="57"/>
        <end position="116"/>
    </location>
</feature>
<feature type="coiled-coil region" evidence="3">
    <location>
        <begin position="88"/>
        <end position="121"/>
    </location>
</feature>
<feature type="compositionally biased region" description="Basic and acidic residues" evidence="4">
    <location>
        <begin position="67"/>
        <end position="95"/>
    </location>
</feature>
<feature type="compositionally biased region" description="Basic and acidic residues" evidence="4">
    <location>
        <begin position="106"/>
        <end position="116"/>
    </location>
</feature>
<feature type="modified residue" description="4-carboxyglutamate" evidence="1">
    <location>
        <position position="69"/>
    </location>
</feature>
<feature type="modified residue" description="4-carboxyglutamate" evidence="1">
    <location>
        <position position="73"/>
    </location>
</feature>
<feature type="modified residue" description="4-carboxyglutamate" evidence="1">
    <location>
        <position position="82"/>
    </location>
</feature>
<feature type="modified residue" description="4-carboxyglutamate" evidence="1">
    <location>
        <position position="86"/>
    </location>
</feature>
<feature type="modified residue" description="4-carboxyglutamate" evidence="1">
    <location>
        <position position="89"/>
    </location>
</feature>
<feature type="modified residue" description="4-carboxyglutamate" evidence="1">
    <location>
        <position position="90"/>
    </location>
</feature>
<feature type="modified residue" description="4-carboxyglutamate" evidence="1">
    <location>
        <position position="94"/>
    </location>
</feature>
<feature type="modified residue" description="4-carboxyglutamate" evidence="1">
    <location>
        <position position="96"/>
    </location>
</feature>
<feature type="modified residue" description="4-carboxyglutamate" evidence="1">
    <location>
        <position position="100"/>
    </location>
</feature>
<feature type="modified residue" description="4-carboxyglutamate" evidence="1">
    <location>
        <position position="101"/>
    </location>
</feature>
<feature type="modified residue" description="4-carboxyglutamate" evidence="1">
    <location>
        <position position="102"/>
    </location>
</feature>
<feature type="modified residue" description="4-carboxyglutamate" evidence="1">
    <location>
        <position position="105"/>
    </location>
</feature>
<feature type="modified residue" description="4-carboxyglutamate" evidence="1">
    <location>
        <position position="108"/>
    </location>
</feature>
<feature type="modified residue" description="4-carboxyglutamate" evidence="1">
    <location>
        <position position="112"/>
    </location>
</feature>
<feature type="modified residue" description="4-carboxyglutamate" evidence="1">
    <location>
        <position position="115"/>
    </location>
</feature>
<feature type="modified residue" description="4-carboxyglutamate" evidence="1">
    <location>
        <position position="119"/>
    </location>
</feature>
<organism>
    <name type="scientific">Dicentrarchus labrax</name>
    <name type="common">European seabass</name>
    <name type="synonym">Morone labrax</name>
    <dbReference type="NCBI Taxonomy" id="13489"/>
    <lineage>
        <taxon>Eukaryota</taxon>
        <taxon>Metazoa</taxon>
        <taxon>Chordata</taxon>
        <taxon>Craniata</taxon>
        <taxon>Vertebrata</taxon>
        <taxon>Euteleostomi</taxon>
        <taxon>Actinopterygii</taxon>
        <taxon>Neopterygii</taxon>
        <taxon>Teleostei</taxon>
        <taxon>Neoteleostei</taxon>
        <taxon>Acanthomorphata</taxon>
        <taxon>Eupercaria</taxon>
        <taxon>Moronidae</taxon>
        <taxon>Dicentrarchus</taxon>
    </lineage>
</organism>